<gene>
    <name evidence="1" type="primary">glgB</name>
    <name type="ordered locus">YPO3942</name>
    <name type="ordered locus">y3886</name>
    <name type="ordered locus">YP_3304</name>
</gene>
<reference key="1">
    <citation type="journal article" date="2001" name="Nature">
        <title>Genome sequence of Yersinia pestis, the causative agent of plague.</title>
        <authorList>
            <person name="Parkhill J."/>
            <person name="Wren B.W."/>
            <person name="Thomson N.R."/>
            <person name="Titball R.W."/>
            <person name="Holden M.T.G."/>
            <person name="Prentice M.B."/>
            <person name="Sebaihia M."/>
            <person name="James K.D."/>
            <person name="Churcher C.M."/>
            <person name="Mungall K.L."/>
            <person name="Baker S."/>
            <person name="Basham D."/>
            <person name="Bentley S.D."/>
            <person name="Brooks K."/>
            <person name="Cerdeno-Tarraga A.-M."/>
            <person name="Chillingworth T."/>
            <person name="Cronin A."/>
            <person name="Davies R.M."/>
            <person name="Davis P."/>
            <person name="Dougan G."/>
            <person name="Feltwell T."/>
            <person name="Hamlin N."/>
            <person name="Holroyd S."/>
            <person name="Jagels K."/>
            <person name="Karlyshev A.V."/>
            <person name="Leather S."/>
            <person name="Moule S."/>
            <person name="Oyston P.C.F."/>
            <person name="Quail M.A."/>
            <person name="Rutherford K.M."/>
            <person name="Simmonds M."/>
            <person name="Skelton J."/>
            <person name="Stevens K."/>
            <person name="Whitehead S."/>
            <person name="Barrell B.G."/>
        </authorList>
    </citation>
    <scope>NUCLEOTIDE SEQUENCE [LARGE SCALE GENOMIC DNA]</scope>
    <source>
        <strain>CO-92 / Biovar Orientalis</strain>
    </source>
</reference>
<reference key="2">
    <citation type="journal article" date="2002" name="J. Bacteriol.">
        <title>Genome sequence of Yersinia pestis KIM.</title>
        <authorList>
            <person name="Deng W."/>
            <person name="Burland V."/>
            <person name="Plunkett G. III"/>
            <person name="Boutin A."/>
            <person name="Mayhew G.F."/>
            <person name="Liss P."/>
            <person name="Perna N.T."/>
            <person name="Rose D.J."/>
            <person name="Mau B."/>
            <person name="Zhou S."/>
            <person name="Schwartz D.C."/>
            <person name="Fetherston J.D."/>
            <person name="Lindler L.E."/>
            <person name="Brubaker R.R."/>
            <person name="Plano G.V."/>
            <person name="Straley S.C."/>
            <person name="McDonough K.A."/>
            <person name="Nilles M.L."/>
            <person name="Matson J.S."/>
            <person name="Blattner F.R."/>
            <person name="Perry R.D."/>
        </authorList>
    </citation>
    <scope>NUCLEOTIDE SEQUENCE [LARGE SCALE GENOMIC DNA]</scope>
    <source>
        <strain>KIM10+ / Biovar Mediaevalis</strain>
    </source>
</reference>
<reference key="3">
    <citation type="journal article" date="2004" name="DNA Res.">
        <title>Complete genome sequence of Yersinia pestis strain 91001, an isolate avirulent to humans.</title>
        <authorList>
            <person name="Song Y."/>
            <person name="Tong Z."/>
            <person name="Wang J."/>
            <person name="Wang L."/>
            <person name="Guo Z."/>
            <person name="Han Y."/>
            <person name="Zhang J."/>
            <person name="Pei D."/>
            <person name="Zhou D."/>
            <person name="Qin H."/>
            <person name="Pang X."/>
            <person name="Han Y."/>
            <person name="Zhai J."/>
            <person name="Li M."/>
            <person name="Cui B."/>
            <person name="Qi Z."/>
            <person name="Jin L."/>
            <person name="Dai R."/>
            <person name="Chen F."/>
            <person name="Li S."/>
            <person name="Ye C."/>
            <person name="Du Z."/>
            <person name="Lin W."/>
            <person name="Wang J."/>
            <person name="Yu J."/>
            <person name="Yang H."/>
            <person name="Wang J."/>
            <person name="Huang P."/>
            <person name="Yang R."/>
        </authorList>
    </citation>
    <scope>NUCLEOTIDE SEQUENCE [LARGE SCALE GENOMIC DNA]</scope>
    <source>
        <strain>91001 / Biovar Mediaevalis</strain>
    </source>
</reference>
<feature type="chain" id="PRO_0000188770" description="1,4-alpha-glucan branching enzyme GlgB">
    <location>
        <begin position="1"/>
        <end position="727"/>
    </location>
</feature>
<feature type="active site" description="Nucleophile" evidence="1">
    <location>
        <position position="405"/>
    </location>
</feature>
<feature type="active site" description="Proton donor" evidence="1">
    <location>
        <position position="458"/>
    </location>
</feature>
<dbReference type="EC" id="2.4.1.18" evidence="1"/>
<dbReference type="EMBL" id="AL590842">
    <property type="protein sequence ID" value="CAL22523.1"/>
    <property type="molecule type" value="Genomic_DNA"/>
</dbReference>
<dbReference type="EMBL" id="AE009952">
    <property type="protein sequence ID" value="AAM87431.1"/>
    <property type="molecule type" value="Genomic_DNA"/>
</dbReference>
<dbReference type="EMBL" id="AE017042">
    <property type="protein sequence ID" value="AAS63469.1"/>
    <property type="molecule type" value="Genomic_DNA"/>
</dbReference>
<dbReference type="PIR" id="AH0479">
    <property type="entry name" value="AH0479"/>
</dbReference>
<dbReference type="RefSeq" id="WP_002209500.1">
    <property type="nucleotide sequence ID" value="NZ_WUCM01000085.1"/>
</dbReference>
<dbReference type="RefSeq" id="YP_002348813.1">
    <property type="nucleotide sequence ID" value="NC_003143.1"/>
</dbReference>
<dbReference type="SMR" id="Q8ZA75"/>
<dbReference type="STRING" id="214092.YPO3942"/>
<dbReference type="CAZy" id="CBM48">
    <property type="family name" value="Carbohydrate-Binding Module Family 48"/>
</dbReference>
<dbReference type="CAZy" id="GH13">
    <property type="family name" value="Glycoside Hydrolase Family 13"/>
</dbReference>
<dbReference type="PaxDb" id="214092-YPO3942"/>
<dbReference type="DNASU" id="1148833"/>
<dbReference type="EnsemblBacteria" id="AAS63469">
    <property type="protein sequence ID" value="AAS63469"/>
    <property type="gene ID" value="YP_3304"/>
</dbReference>
<dbReference type="GeneID" id="57974762"/>
<dbReference type="KEGG" id="ype:YPO3942"/>
<dbReference type="KEGG" id="ypk:y3886"/>
<dbReference type="KEGG" id="ypm:YP_3304"/>
<dbReference type="PATRIC" id="fig|214092.21.peg.4468"/>
<dbReference type="eggNOG" id="COG0296">
    <property type="taxonomic scope" value="Bacteria"/>
</dbReference>
<dbReference type="HOGENOM" id="CLU_004245_3_2_6"/>
<dbReference type="OMA" id="HWRETDK"/>
<dbReference type="OrthoDB" id="9800174at2"/>
<dbReference type="UniPathway" id="UPA00164"/>
<dbReference type="Proteomes" id="UP000000815">
    <property type="component" value="Chromosome"/>
</dbReference>
<dbReference type="Proteomes" id="UP000001019">
    <property type="component" value="Chromosome"/>
</dbReference>
<dbReference type="Proteomes" id="UP000002490">
    <property type="component" value="Chromosome"/>
</dbReference>
<dbReference type="GO" id="GO:0005737">
    <property type="term" value="C:cytoplasm"/>
    <property type="evidence" value="ECO:0000318"/>
    <property type="project" value="GO_Central"/>
</dbReference>
<dbReference type="GO" id="GO:0005829">
    <property type="term" value="C:cytosol"/>
    <property type="evidence" value="ECO:0000318"/>
    <property type="project" value="GO_Central"/>
</dbReference>
<dbReference type="GO" id="GO:0003844">
    <property type="term" value="F:1,4-alpha-glucan branching enzyme activity"/>
    <property type="evidence" value="ECO:0000318"/>
    <property type="project" value="GO_Central"/>
</dbReference>
<dbReference type="GO" id="GO:0043169">
    <property type="term" value="F:cation binding"/>
    <property type="evidence" value="ECO:0007669"/>
    <property type="project" value="InterPro"/>
</dbReference>
<dbReference type="GO" id="GO:0004553">
    <property type="term" value="F:hydrolase activity, hydrolyzing O-glycosyl compounds"/>
    <property type="evidence" value="ECO:0007669"/>
    <property type="project" value="InterPro"/>
</dbReference>
<dbReference type="GO" id="GO:0005978">
    <property type="term" value="P:glycogen biosynthetic process"/>
    <property type="evidence" value="ECO:0000318"/>
    <property type="project" value="GO_Central"/>
</dbReference>
<dbReference type="CDD" id="cd11322">
    <property type="entry name" value="AmyAc_Glg_BE"/>
    <property type="match status" value="1"/>
</dbReference>
<dbReference type="CDD" id="cd02855">
    <property type="entry name" value="E_set_GBE_prok_N"/>
    <property type="match status" value="1"/>
</dbReference>
<dbReference type="FunFam" id="2.60.40.10:FF:000169">
    <property type="entry name" value="1,4-alpha-glucan branching enzyme GlgB"/>
    <property type="match status" value="1"/>
</dbReference>
<dbReference type="FunFam" id="2.60.40.1180:FF:000002">
    <property type="entry name" value="1,4-alpha-glucan branching enzyme GlgB"/>
    <property type="match status" value="1"/>
</dbReference>
<dbReference type="FunFam" id="3.20.20.80:FF:000003">
    <property type="entry name" value="1,4-alpha-glucan branching enzyme GlgB"/>
    <property type="match status" value="1"/>
</dbReference>
<dbReference type="Gene3D" id="3.20.20.80">
    <property type="entry name" value="Glycosidases"/>
    <property type="match status" value="1"/>
</dbReference>
<dbReference type="Gene3D" id="2.60.40.1180">
    <property type="entry name" value="Golgi alpha-mannosidase II"/>
    <property type="match status" value="1"/>
</dbReference>
<dbReference type="Gene3D" id="2.60.40.10">
    <property type="entry name" value="Immunoglobulins"/>
    <property type="match status" value="2"/>
</dbReference>
<dbReference type="HAMAP" id="MF_00685">
    <property type="entry name" value="GlgB"/>
    <property type="match status" value="1"/>
</dbReference>
<dbReference type="InterPro" id="IPR006048">
    <property type="entry name" value="A-amylase/branching_C"/>
</dbReference>
<dbReference type="InterPro" id="IPR037439">
    <property type="entry name" value="Branching_enzy"/>
</dbReference>
<dbReference type="InterPro" id="IPR006407">
    <property type="entry name" value="GlgB"/>
</dbReference>
<dbReference type="InterPro" id="IPR054169">
    <property type="entry name" value="GlgB_N"/>
</dbReference>
<dbReference type="InterPro" id="IPR044143">
    <property type="entry name" value="GlgB_N_E_set_prok"/>
</dbReference>
<dbReference type="InterPro" id="IPR006047">
    <property type="entry name" value="Glyco_hydro_13_cat_dom"/>
</dbReference>
<dbReference type="InterPro" id="IPR004193">
    <property type="entry name" value="Glyco_hydro_13_N"/>
</dbReference>
<dbReference type="InterPro" id="IPR013780">
    <property type="entry name" value="Glyco_hydro_b"/>
</dbReference>
<dbReference type="InterPro" id="IPR017853">
    <property type="entry name" value="Glycoside_hydrolase_SF"/>
</dbReference>
<dbReference type="InterPro" id="IPR013783">
    <property type="entry name" value="Ig-like_fold"/>
</dbReference>
<dbReference type="InterPro" id="IPR014756">
    <property type="entry name" value="Ig_E-set"/>
</dbReference>
<dbReference type="NCBIfam" id="TIGR01515">
    <property type="entry name" value="branching_enzym"/>
    <property type="match status" value="1"/>
</dbReference>
<dbReference type="NCBIfam" id="NF003811">
    <property type="entry name" value="PRK05402.1"/>
    <property type="match status" value="1"/>
</dbReference>
<dbReference type="NCBIfam" id="NF008967">
    <property type="entry name" value="PRK12313.1"/>
    <property type="match status" value="1"/>
</dbReference>
<dbReference type="PANTHER" id="PTHR43651">
    <property type="entry name" value="1,4-ALPHA-GLUCAN-BRANCHING ENZYME"/>
    <property type="match status" value="1"/>
</dbReference>
<dbReference type="PANTHER" id="PTHR43651:SF3">
    <property type="entry name" value="1,4-ALPHA-GLUCAN-BRANCHING ENZYME"/>
    <property type="match status" value="1"/>
</dbReference>
<dbReference type="Pfam" id="PF00128">
    <property type="entry name" value="Alpha-amylase"/>
    <property type="match status" value="1"/>
</dbReference>
<dbReference type="Pfam" id="PF02806">
    <property type="entry name" value="Alpha-amylase_C"/>
    <property type="match status" value="1"/>
</dbReference>
<dbReference type="Pfam" id="PF02922">
    <property type="entry name" value="CBM_48"/>
    <property type="match status" value="1"/>
</dbReference>
<dbReference type="Pfam" id="PF22019">
    <property type="entry name" value="GlgB_N"/>
    <property type="match status" value="1"/>
</dbReference>
<dbReference type="PIRSF" id="PIRSF000463">
    <property type="entry name" value="GlgB"/>
    <property type="match status" value="1"/>
</dbReference>
<dbReference type="SMART" id="SM00642">
    <property type="entry name" value="Aamy"/>
    <property type="match status" value="1"/>
</dbReference>
<dbReference type="SUPFAM" id="SSF51445">
    <property type="entry name" value="(Trans)glycosidases"/>
    <property type="match status" value="1"/>
</dbReference>
<dbReference type="SUPFAM" id="SSF81296">
    <property type="entry name" value="E set domains"/>
    <property type="match status" value="2"/>
</dbReference>
<dbReference type="SUPFAM" id="SSF51011">
    <property type="entry name" value="Glycosyl hydrolase domain"/>
    <property type="match status" value="1"/>
</dbReference>
<organism>
    <name type="scientific">Yersinia pestis</name>
    <dbReference type="NCBI Taxonomy" id="632"/>
    <lineage>
        <taxon>Bacteria</taxon>
        <taxon>Pseudomonadati</taxon>
        <taxon>Pseudomonadota</taxon>
        <taxon>Gammaproteobacteria</taxon>
        <taxon>Enterobacterales</taxon>
        <taxon>Yersiniaceae</taxon>
        <taxon>Yersinia</taxon>
    </lineage>
</organism>
<sequence length="727" mass="84135">MSVLPDRQVINQLISGHYGDPFSILGMHETSQGLQICALLPDAREVWLVETENGRRIAQLTLEDPRGFFIAQLTRRKKSFRYQFAVTWQENPQIIEDPYRFGPLLQDIDSWLLAEGTHLRPYERLGAHLMSLDGVSGVSFAVWAPNAQRVSVVGDFNFWDGRRHPMRLRRENGIWELFLPGIEAGQLYKFEIIDCHGQVRLKADPYAFEAQMRPETASLISPLPDVVKSSAARQKANDLCSPVSIYEVHLGSWRRHTDNNFWLSYRELADQLVEYVKYMGFTHVELLPINEHPFDGSWGYQPLGLYAPTRRYGTPEDFKAFVAKFHQAGINVILDWVPGHFPSDEHGLSTFDGTALYEYADPREGYHQDWNTLIYNYGRNEVRNYLAGNAFYWMERFGIDALRIDAVASMIYRDYSRAEGQWVPNYYGGRENLEAIAFLRYTNKTIGVERPGSVTMAEESTDFPGVTLPPDIGGLGFNYKWNMGWMHDTLNYMQCDPVHRKYHHNLMTFGMLYAYTENFILPLSHDEVVHGKRSILDRMPGDAWQKFANLRAYYAFMWAHPGKKLLFMGCEFAQGREWNFETSLDWHLLDDENGWHSGVQRLVRDLNHCYRQYAPLYEWDYQPAGFEWLVVDDHENSVFAFLRRDAEGHELIAISNFTPVPRYHYRVGIPQGGHYREVLNSDSAFYCGSNLGNQGGIDSHHVRSHNHEHSLLLTLPPLATIYLLREN</sequence>
<evidence type="ECO:0000255" key="1">
    <source>
        <dbReference type="HAMAP-Rule" id="MF_00685"/>
    </source>
</evidence>
<protein>
    <recommendedName>
        <fullName evidence="1">1,4-alpha-glucan branching enzyme GlgB</fullName>
        <ecNumber evidence="1">2.4.1.18</ecNumber>
    </recommendedName>
    <alternativeName>
        <fullName evidence="1">1,4-alpha-D-glucan:1,4-alpha-D-glucan 6-glucosyl-transferase</fullName>
    </alternativeName>
    <alternativeName>
        <fullName evidence="1">Alpha-(1-&gt;4)-glucan branching enzyme</fullName>
    </alternativeName>
    <alternativeName>
        <fullName evidence="1">Glycogen branching enzyme</fullName>
        <shortName evidence="1">BE</shortName>
    </alternativeName>
</protein>
<accession>Q8ZA75</accession>
<accession>Q0WA75</accession>
<name>GLGB_YERPE</name>
<comment type="function">
    <text evidence="1">Catalyzes the formation of the alpha-1,6-glucosidic linkages in glycogen by scission of a 1,4-alpha-linked oligosaccharide from growing alpha-1,4-glucan chains and the subsequent attachment of the oligosaccharide to the alpha-1,6 position.</text>
</comment>
<comment type="catalytic activity">
    <reaction evidence="1">
        <text>Transfers a segment of a (1-&gt;4)-alpha-D-glucan chain to a primary hydroxy group in a similar glucan chain.</text>
        <dbReference type="EC" id="2.4.1.18"/>
    </reaction>
</comment>
<comment type="pathway">
    <text evidence="1">Glycan biosynthesis; glycogen biosynthesis.</text>
</comment>
<comment type="subunit">
    <text evidence="1">Monomer.</text>
</comment>
<comment type="similarity">
    <text evidence="1">Belongs to the glycosyl hydrolase 13 family. GlgB subfamily.</text>
</comment>
<proteinExistence type="inferred from homology"/>
<keyword id="KW-0119">Carbohydrate metabolism</keyword>
<keyword id="KW-0320">Glycogen biosynthesis</keyword>
<keyword id="KW-0321">Glycogen metabolism</keyword>
<keyword id="KW-0328">Glycosyltransferase</keyword>
<keyword id="KW-1185">Reference proteome</keyword>
<keyword id="KW-0808">Transferase</keyword>